<organism>
    <name type="scientific">Chlamydia pneumoniae</name>
    <name type="common">Chlamydophila pneumoniae</name>
    <dbReference type="NCBI Taxonomy" id="83558"/>
    <lineage>
        <taxon>Bacteria</taxon>
        <taxon>Pseudomonadati</taxon>
        <taxon>Chlamydiota</taxon>
        <taxon>Chlamydiia</taxon>
        <taxon>Chlamydiales</taxon>
        <taxon>Chlamydiaceae</taxon>
        <taxon>Chlamydia/Chlamydophila group</taxon>
        <taxon>Chlamydia</taxon>
    </lineage>
</organism>
<gene>
    <name type="primary">lpdA</name>
    <name type="ordered locus">CPn_0833</name>
    <name type="ordered locus">CP_1037</name>
    <name type="ordered locus">CpB0862</name>
</gene>
<comment type="function">
    <text evidence="1">The branched-chain alpha-keto dehydrogenase complex catalyzes the overall conversion of alpha-keto acids to acyl-CoA and CO(2). It contains multiple copies of 3 enzymatic components: branched-chain alpha-keto acid decarboxylase (E1), lipoamide acyltransferase (E2) and lipoamide dehydrogenase (E3) (By similarity).</text>
</comment>
<comment type="catalytic activity">
    <reaction>
        <text>N(6)-[(R)-dihydrolipoyl]-L-lysyl-[protein] + NAD(+) = N(6)-[(R)-lipoyl]-L-lysyl-[protein] + NADH + H(+)</text>
        <dbReference type="Rhea" id="RHEA:15045"/>
        <dbReference type="Rhea" id="RHEA-COMP:10474"/>
        <dbReference type="Rhea" id="RHEA-COMP:10475"/>
        <dbReference type="ChEBI" id="CHEBI:15378"/>
        <dbReference type="ChEBI" id="CHEBI:57540"/>
        <dbReference type="ChEBI" id="CHEBI:57945"/>
        <dbReference type="ChEBI" id="CHEBI:83099"/>
        <dbReference type="ChEBI" id="CHEBI:83100"/>
        <dbReference type="EC" id="1.8.1.4"/>
    </reaction>
</comment>
<comment type="cofactor">
    <cofactor evidence="1">
        <name>FAD</name>
        <dbReference type="ChEBI" id="CHEBI:57692"/>
    </cofactor>
    <text evidence="1">Binds 1 FAD per subunit.</text>
</comment>
<comment type="subcellular location">
    <subcellularLocation>
        <location evidence="1">Cytoplasm</location>
    </subcellularLocation>
</comment>
<comment type="miscellaneous">
    <text>The active site is a redox-active disulfide bond.</text>
</comment>
<comment type="similarity">
    <text evidence="2">Belongs to the class-I pyridine nucleotide-disulfide oxidoreductase family.</text>
</comment>
<sequence length="461" mass="49167">MTQEFDCVVIGAGPSGYVAAITAAQSKLRTALIEEDQAGGTCLNRGCIPSKALIAGANVVSHIKHAEQFGIHVDGYTIDYPAMAKRKNTVVQGIRQGLEGLIRSNKITVLKGTGSLVSSTEVKVIGQDTTIIKANHIILATGSEPRPFPGVPFSSRILSSTGILELEVLPKKLAIIGGGVIGCEFASLFHTLGVEITVIEALDHILAVNNKEVSQTVTNKFTKQGIRILTKASISAIEESQNQVRITVNDQVEEFDYVLVAIGRQFNTASIGLDNAGVIRDDRGVIPVDETMRTNVPNIYAIGDITGKWLLAHVASHQGVIAAKNISGHHEVMDYSAIPSVIFTHPEIAMVGLSLQEAEQQNLPAKLTKFPFKAIGKAVALGASDGFAAIVSHEITQQILGAYVIGPHASSLIGEMTLAIRNELTLPCIYETVHAHPTLSEVWAEGALLATNHPLHFPPKS</sequence>
<name>DLDH_CHLPN</name>
<accession>Q9Z773</accession>
<accession>Q9JQE6</accession>
<evidence type="ECO:0000250" key="1"/>
<evidence type="ECO:0000305" key="2"/>
<keyword id="KW-0963">Cytoplasm</keyword>
<keyword id="KW-1015">Disulfide bond</keyword>
<keyword id="KW-0274">FAD</keyword>
<keyword id="KW-0285">Flavoprotein</keyword>
<keyword id="KW-0520">NAD</keyword>
<keyword id="KW-0560">Oxidoreductase</keyword>
<keyword id="KW-0676">Redox-active center</keyword>
<feature type="chain" id="PRO_0000068025" description="Dihydrolipoyl dehydrogenase">
    <location>
        <begin position="1"/>
        <end position="461"/>
    </location>
</feature>
<feature type="active site" description="Proton acceptor" evidence="1">
    <location>
        <position position="436"/>
    </location>
</feature>
<feature type="binding site" evidence="1">
    <location>
        <begin position="34"/>
        <end position="42"/>
    </location>
    <ligand>
        <name>FAD</name>
        <dbReference type="ChEBI" id="CHEBI:57692"/>
    </ligand>
</feature>
<feature type="binding site" evidence="1">
    <location>
        <position position="51"/>
    </location>
    <ligand>
        <name>FAD</name>
        <dbReference type="ChEBI" id="CHEBI:57692"/>
    </ligand>
</feature>
<feature type="binding site" evidence="1">
    <location>
        <position position="114"/>
    </location>
    <ligand>
        <name>FAD</name>
        <dbReference type="ChEBI" id="CHEBI:57692"/>
    </ligand>
</feature>
<feature type="binding site" evidence="1">
    <location>
        <begin position="177"/>
        <end position="181"/>
    </location>
    <ligand>
        <name>NAD(+)</name>
        <dbReference type="ChEBI" id="CHEBI:57540"/>
    </ligand>
</feature>
<feature type="binding site" evidence="1">
    <location>
        <position position="200"/>
    </location>
    <ligand>
        <name>NAD(+)</name>
        <dbReference type="ChEBI" id="CHEBI:57540"/>
    </ligand>
</feature>
<feature type="binding site" evidence="1">
    <location>
        <begin position="261"/>
        <end position="264"/>
    </location>
    <ligand>
        <name>NAD(+)</name>
        <dbReference type="ChEBI" id="CHEBI:57540"/>
    </ligand>
</feature>
<feature type="binding site" evidence="1">
    <location>
        <position position="304"/>
    </location>
    <ligand>
        <name>FAD</name>
        <dbReference type="ChEBI" id="CHEBI:57692"/>
    </ligand>
</feature>
<feature type="binding site" evidence="1">
    <location>
        <position position="312"/>
    </location>
    <ligand>
        <name>FAD</name>
        <dbReference type="ChEBI" id="CHEBI:57692"/>
    </ligand>
</feature>
<feature type="disulfide bond" description="Redox-active" evidence="1">
    <location>
        <begin position="42"/>
        <end position="47"/>
    </location>
</feature>
<feature type="sequence conflict" description="In Ref. 5; AAP98791." evidence="2" ref="5">
    <original>K</original>
    <variation>T</variation>
    <location>
        <position position="64"/>
    </location>
</feature>
<dbReference type="EC" id="1.8.1.4"/>
<dbReference type="EMBL" id="AE001363">
    <property type="protein sequence ID" value="AAD18970.1"/>
    <property type="molecule type" value="Genomic_DNA"/>
</dbReference>
<dbReference type="EMBL" id="AE002161">
    <property type="protein sequence ID" value="AAF38812.1"/>
    <property type="molecule type" value="Genomic_DNA"/>
</dbReference>
<dbReference type="EMBL" id="BA000008">
    <property type="protein sequence ID" value="BAA99041.1"/>
    <property type="molecule type" value="Genomic_DNA"/>
</dbReference>
<dbReference type="EMBL" id="AB035943">
    <property type="protein sequence ID" value="BAA88651.1"/>
    <property type="molecule type" value="Genomic_DNA"/>
</dbReference>
<dbReference type="EMBL" id="AE009440">
    <property type="protein sequence ID" value="AAP98791.1"/>
    <property type="molecule type" value="Genomic_DNA"/>
</dbReference>
<dbReference type="PIR" id="C72031">
    <property type="entry name" value="C72031"/>
</dbReference>
<dbReference type="PIR" id="G86594">
    <property type="entry name" value="G86594"/>
</dbReference>
<dbReference type="RefSeq" id="NP_225028.1">
    <property type="nucleotide sequence ID" value="NC_000922.1"/>
</dbReference>
<dbReference type="RefSeq" id="WP_010883470.1">
    <property type="nucleotide sequence ID" value="NZ_LN847257.1"/>
</dbReference>
<dbReference type="SMR" id="Q9Z773"/>
<dbReference type="STRING" id="406984.CPK_ORF00240"/>
<dbReference type="GeneID" id="45050887"/>
<dbReference type="KEGG" id="cpa:CP_1037"/>
<dbReference type="KEGG" id="cpj:lpdA"/>
<dbReference type="KEGG" id="cpn:CPn_0833"/>
<dbReference type="KEGG" id="cpt:CpB0862"/>
<dbReference type="PATRIC" id="fig|115713.3.peg.912"/>
<dbReference type="eggNOG" id="COG1249">
    <property type="taxonomic scope" value="Bacteria"/>
</dbReference>
<dbReference type="HOGENOM" id="CLU_016755_0_3_0"/>
<dbReference type="OrthoDB" id="9807946at2"/>
<dbReference type="Proteomes" id="UP000000583">
    <property type="component" value="Chromosome"/>
</dbReference>
<dbReference type="Proteomes" id="UP000000801">
    <property type="component" value="Chromosome"/>
</dbReference>
<dbReference type="GO" id="GO:0005737">
    <property type="term" value="C:cytoplasm"/>
    <property type="evidence" value="ECO:0007669"/>
    <property type="project" value="UniProtKB-SubCell"/>
</dbReference>
<dbReference type="GO" id="GO:0004148">
    <property type="term" value="F:dihydrolipoyl dehydrogenase (NADH) activity"/>
    <property type="evidence" value="ECO:0007669"/>
    <property type="project" value="UniProtKB-EC"/>
</dbReference>
<dbReference type="GO" id="GO:0050660">
    <property type="term" value="F:flavin adenine dinucleotide binding"/>
    <property type="evidence" value="ECO:0007669"/>
    <property type="project" value="InterPro"/>
</dbReference>
<dbReference type="GO" id="GO:0006103">
    <property type="term" value="P:2-oxoglutarate metabolic process"/>
    <property type="evidence" value="ECO:0007669"/>
    <property type="project" value="TreeGrafter"/>
</dbReference>
<dbReference type="FunFam" id="3.30.390.30:FF:000001">
    <property type="entry name" value="Dihydrolipoyl dehydrogenase"/>
    <property type="match status" value="1"/>
</dbReference>
<dbReference type="Gene3D" id="3.30.390.30">
    <property type="match status" value="1"/>
</dbReference>
<dbReference type="Gene3D" id="3.50.50.60">
    <property type="entry name" value="FAD/NAD(P)-binding domain"/>
    <property type="match status" value="2"/>
</dbReference>
<dbReference type="InterPro" id="IPR050151">
    <property type="entry name" value="Class-I_Pyr_Nuc-Dis_Oxidored"/>
</dbReference>
<dbReference type="InterPro" id="IPR036188">
    <property type="entry name" value="FAD/NAD-bd_sf"/>
</dbReference>
<dbReference type="InterPro" id="IPR023753">
    <property type="entry name" value="FAD/NAD-binding_dom"/>
</dbReference>
<dbReference type="InterPro" id="IPR016156">
    <property type="entry name" value="FAD/NAD-linked_Rdtase_dimer_sf"/>
</dbReference>
<dbReference type="InterPro" id="IPR006258">
    <property type="entry name" value="Lipoamide_DH"/>
</dbReference>
<dbReference type="InterPro" id="IPR001100">
    <property type="entry name" value="Pyr_nuc-diS_OxRdtase"/>
</dbReference>
<dbReference type="InterPro" id="IPR004099">
    <property type="entry name" value="Pyr_nucl-diS_OxRdtase_dimer"/>
</dbReference>
<dbReference type="InterPro" id="IPR012999">
    <property type="entry name" value="Pyr_OxRdtase_I_AS"/>
</dbReference>
<dbReference type="NCBIfam" id="TIGR01350">
    <property type="entry name" value="lipoamide_DH"/>
    <property type="match status" value="1"/>
</dbReference>
<dbReference type="PANTHER" id="PTHR22912:SF217">
    <property type="entry name" value="DIHYDROLIPOYL DEHYDROGENASE"/>
    <property type="match status" value="1"/>
</dbReference>
<dbReference type="PANTHER" id="PTHR22912">
    <property type="entry name" value="DISULFIDE OXIDOREDUCTASE"/>
    <property type="match status" value="1"/>
</dbReference>
<dbReference type="Pfam" id="PF07992">
    <property type="entry name" value="Pyr_redox_2"/>
    <property type="match status" value="1"/>
</dbReference>
<dbReference type="Pfam" id="PF02852">
    <property type="entry name" value="Pyr_redox_dim"/>
    <property type="match status" value="1"/>
</dbReference>
<dbReference type="PIRSF" id="PIRSF000350">
    <property type="entry name" value="Mercury_reductase_MerA"/>
    <property type="match status" value="1"/>
</dbReference>
<dbReference type="PRINTS" id="PR00368">
    <property type="entry name" value="FADPNR"/>
</dbReference>
<dbReference type="PRINTS" id="PR00411">
    <property type="entry name" value="PNDRDTASEI"/>
</dbReference>
<dbReference type="SUPFAM" id="SSF51905">
    <property type="entry name" value="FAD/NAD(P)-binding domain"/>
    <property type="match status" value="1"/>
</dbReference>
<dbReference type="SUPFAM" id="SSF55424">
    <property type="entry name" value="FAD/NAD-linked reductases, dimerisation (C-terminal) domain"/>
    <property type="match status" value="1"/>
</dbReference>
<dbReference type="PROSITE" id="PS00076">
    <property type="entry name" value="PYRIDINE_REDOX_1"/>
    <property type="match status" value="1"/>
</dbReference>
<reference key="1">
    <citation type="journal article" date="1999" name="Nat. Genet.">
        <title>Comparative genomes of Chlamydia pneumoniae and C. trachomatis.</title>
        <authorList>
            <person name="Kalman S."/>
            <person name="Mitchell W.P."/>
            <person name="Marathe R."/>
            <person name="Lammel C.J."/>
            <person name="Fan J."/>
            <person name="Hyman R.W."/>
            <person name="Olinger L."/>
            <person name="Grimwood J."/>
            <person name="Davis R.W."/>
            <person name="Stephens R.S."/>
        </authorList>
    </citation>
    <scope>NUCLEOTIDE SEQUENCE [LARGE SCALE GENOMIC DNA]</scope>
    <source>
        <strain>CWL029</strain>
    </source>
</reference>
<reference key="2">
    <citation type="journal article" date="2000" name="Nucleic Acids Res.">
        <title>Genome sequences of Chlamydia trachomatis MoPn and Chlamydia pneumoniae AR39.</title>
        <authorList>
            <person name="Read T.D."/>
            <person name="Brunham R.C."/>
            <person name="Shen C."/>
            <person name="Gill S.R."/>
            <person name="Heidelberg J.F."/>
            <person name="White O."/>
            <person name="Hickey E.K."/>
            <person name="Peterson J.D."/>
            <person name="Utterback T.R."/>
            <person name="Berry K.J."/>
            <person name="Bass S."/>
            <person name="Linher K.D."/>
            <person name="Weidman J.F."/>
            <person name="Khouri H.M."/>
            <person name="Craven B."/>
            <person name="Bowman C."/>
            <person name="Dodson R.J."/>
            <person name="Gwinn M.L."/>
            <person name="Nelson W.C."/>
            <person name="DeBoy R.T."/>
            <person name="Kolonay J.F."/>
            <person name="McClarty G."/>
            <person name="Salzberg S.L."/>
            <person name="Eisen J.A."/>
            <person name="Fraser C.M."/>
        </authorList>
    </citation>
    <scope>NUCLEOTIDE SEQUENCE [LARGE SCALE GENOMIC DNA]</scope>
    <source>
        <strain>AR39</strain>
    </source>
</reference>
<reference key="3">
    <citation type="journal article" date="2000" name="Nucleic Acids Res.">
        <title>Comparison of whole genome sequences of Chlamydia pneumoniae J138 from Japan and CWL029 from USA.</title>
        <authorList>
            <person name="Shirai M."/>
            <person name="Hirakawa H."/>
            <person name="Kimoto M."/>
            <person name="Tabuchi M."/>
            <person name="Kishi F."/>
            <person name="Ouchi K."/>
            <person name="Shiba T."/>
            <person name="Ishii K."/>
            <person name="Hattori M."/>
            <person name="Kuhara S."/>
            <person name="Nakazawa T."/>
        </authorList>
    </citation>
    <scope>NUCLEOTIDE SEQUENCE [LARGE SCALE GENOMIC DNA]</scope>
    <source>
        <strain>J138</strain>
    </source>
</reference>
<reference key="4">
    <citation type="submission" date="2000-01" db="EMBL/GenBank/DDBJ databases">
        <title>Genomic sequence comparison of two unrelated isolates of Chlamydia pneumoniae from Japan and U.S.</title>
        <authorList>
            <person name="Shirai M."/>
        </authorList>
    </citation>
    <scope>NUCLEOTIDE SEQUENCE [GENOMIC DNA]</scope>
    <source>
        <strain>J138</strain>
    </source>
</reference>
<reference key="5">
    <citation type="submission" date="2002-05" db="EMBL/GenBank/DDBJ databases">
        <title>The genome sequence of Chlamydia pneumoniae TW183 and comparison with other Chlamydia strains based on whole genome sequence analysis.</title>
        <authorList>
            <person name="Geng M.M."/>
            <person name="Schuhmacher A."/>
            <person name="Muehldorfer I."/>
            <person name="Bensch K.W."/>
            <person name="Schaefer K.P."/>
            <person name="Schneider S."/>
            <person name="Pohl T."/>
            <person name="Essig A."/>
            <person name="Marre R."/>
            <person name="Melchers K."/>
        </authorList>
    </citation>
    <scope>NUCLEOTIDE SEQUENCE [LARGE SCALE GENOMIC DNA]</scope>
    <source>
        <strain>TW-183</strain>
    </source>
</reference>
<protein>
    <recommendedName>
        <fullName>Dihydrolipoyl dehydrogenase</fullName>
        <ecNumber>1.8.1.4</ecNumber>
    </recommendedName>
    <alternativeName>
        <fullName>Dihydrolipoamide dehydrogenase</fullName>
    </alternativeName>
    <alternativeName>
        <fullName>E3 component of 2-oxoglutarate dehydrogenase complex</fullName>
    </alternativeName>
</protein>
<proteinExistence type="inferred from homology"/>